<sequence length="88" mass="9687">MITADNITSHEFIGLNTEIVQSTNPQVIGLNGRIENETKSMFTINTENGMKSIAKSTSNWKFSIDSNDVIVEGSRIAKRPFDRIGGKA</sequence>
<dbReference type="EC" id="3.1.26.5" evidence="1"/>
<dbReference type="EMBL" id="CP000866">
    <property type="protein sequence ID" value="ABX12698.1"/>
    <property type="molecule type" value="Genomic_DNA"/>
</dbReference>
<dbReference type="RefSeq" id="WP_012215185.1">
    <property type="nucleotide sequence ID" value="NC_010085.1"/>
</dbReference>
<dbReference type="SMR" id="A9A5I7"/>
<dbReference type="STRING" id="436308.Nmar_0802"/>
<dbReference type="EnsemblBacteria" id="ABX12698">
    <property type="protein sequence ID" value="ABX12698"/>
    <property type="gene ID" value="Nmar_0802"/>
</dbReference>
<dbReference type="GeneID" id="5773809"/>
<dbReference type="KEGG" id="nmr:Nmar_0802"/>
<dbReference type="eggNOG" id="arCOG00784">
    <property type="taxonomic scope" value="Archaea"/>
</dbReference>
<dbReference type="HOGENOM" id="CLU_107020_2_0_2"/>
<dbReference type="InParanoid" id="A9A5I7"/>
<dbReference type="OrthoDB" id="39019at2157"/>
<dbReference type="PhylomeDB" id="A9A5I7"/>
<dbReference type="Proteomes" id="UP000000792">
    <property type="component" value="Chromosome"/>
</dbReference>
<dbReference type="GO" id="GO:0005737">
    <property type="term" value="C:cytoplasm"/>
    <property type="evidence" value="ECO:0007669"/>
    <property type="project" value="UniProtKB-SubCell"/>
</dbReference>
<dbReference type="GO" id="GO:0030677">
    <property type="term" value="C:ribonuclease P complex"/>
    <property type="evidence" value="ECO:0007669"/>
    <property type="project" value="UniProtKB-UniRule"/>
</dbReference>
<dbReference type="GO" id="GO:0004526">
    <property type="term" value="F:ribonuclease P activity"/>
    <property type="evidence" value="ECO:0007669"/>
    <property type="project" value="UniProtKB-UniRule"/>
</dbReference>
<dbReference type="GO" id="GO:0003723">
    <property type="term" value="F:RNA binding"/>
    <property type="evidence" value="ECO:0007669"/>
    <property type="project" value="InterPro"/>
</dbReference>
<dbReference type="GO" id="GO:0001682">
    <property type="term" value="P:tRNA 5'-leader removal"/>
    <property type="evidence" value="ECO:0007669"/>
    <property type="project" value="UniProtKB-UniRule"/>
</dbReference>
<dbReference type="Gene3D" id="2.30.30.210">
    <property type="entry name" value="Ribonuclease P/MRP, subunit p29"/>
    <property type="match status" value="1"/>
</dbReference>
<dbReference type="HAMAP" id="MF_00754">
    <property type="entry name" value="RNase_P_1"/>
    <property type="match status" value="1"/>
</dbReference>
<dbReference type="InterPro" id="IPR036980">
    <property type="entry name" value="RNase_P/MRP_Rpp29_sf"/>
</dbReference>
<dbReference type="InterPro" id="IPR023538">
    <property type="entry name" value="RNP1"/>
</dbReference>
<dbReference type="InterPro" id="IPR023534">
    <property type="entry name" value="Rof/RNase_P-like"/>
</dbReference>
<dbReference type="InterPro" id="IPR002730">
    <property type="entry name" value="Rpp29/RNP1"/>
</dbReference>
<dbReference type="Pfam" id="PF01868">
    <property type="entry name" value="RNase_P-MRP_p29"/>
    <property type="match status" value="1"/>
</dbReference>
<dbReference type="SMART" id="SM00538">
    <property type="entry name" value="POP4"/>
    <property type="match status" value="1"/>
</dbReference>
<dbReference type="SUPFAM" id="SSF101744">
    <property type="entry name" value="Rof/RNase P subunit-like"/>
    <property type="match status" value="1"/>
</dbReference>
<name>RNP1_NITMS</name>
<gene>
    <name evidence="1" type="primary">rnp1</name>
    <name type="ordered locus">Nmar_0802</name>
</gene>
<protein>
    <recommendedName>
        <fullName evidence="1">Ribonuclease P protein component 1</fullName>
        <shortName evidence="1">RNase P component 1</shortName>
        <ecNumber evidence="1">3.1.26.5</ecNumber>
    </recommendedName>
    <alternativeName>
        <fullName evidence="1">Rpp29</fullName>
    </alternativeName>
</protein>
<comment type="function">
    <text evidence="1">Part of ribonuclease P, a protein complex that generates mature tRNA molecules by cleaving their 5'-ends.</text>
</comment>
<comment type="catalytic activity">
    <reaction evidence="1">
        <text>Endonucleolytic cleavage of RNA, removing 5'-extranucleotides from tRNA precursor.</text>
        <dbReference type="EC" id="3.1.26.5"/>
    </reaction>
</comment>
<comment type="subunit">
    <text evidence="1">Consists of a catalytic RNA component and at least 4-5 protein subunits.</text>
</comment>
<comment type="subcellular location">
    <subcellularLocation>
        <location evidence="1">Cytoplasm</location>
    </subcellularLocation>
</comment>
<comment type="similarity">
    <text evidence="1">Belongs to the eukaryotic/archaeal RNase P protein component 1 family.</text>
</comment>
<feature type="chain" id="PRO_1000148363" description="Ribonuclease P protein component 1">
    <location>
        <begin position="1"/>
        <end position="88"/>
    </location>
</feature>
<reference key="1">
    <citation type="journal article" date="2010" name="Proc. Natl. Acad. Sci. U.S.A.">
        <title>Nitrosopumilus maritimus genome reveals unique mechanisms for nitrification and autotrophy in globally distributed marine crenarchaea.</title>
        <authorList>
            <person name="Walker C.B."/>
            <person name="de la Torre J.R."/>
            <person name="Klotz M.G."/>
            <person name="Urakawa H."/>
            <person name="Pinel N."/>
            <person name="Arp D.J."/>
            <person name="Brochier-Armanet C."/>
            <person name="Chain P.S."/>
            <person name="Chan P.P."/>
            <person name="Gollabgir A."/>
            <person name="Hemp J."/>
            <person name="Hugler M."/>
            <person name="Karr E.A."/>
            <person name="Konneke M."/>
            <person name="Shin M."/>
            <person name="Lawton T.J."/>
            <person name="Lowe T."/>
            <person name="Martens-Habbena W."/>
            <person name="Sayavedra-Soto L.A."/>
            <person name="Lang D."/>
            <person name="Sievert S.M."/>
            <person name="Rosenzweig A.C."/>
            <person name="Manning G."/>
            <person name="Stahl D.A."/>
        </authorList>
    </citation>
    <scope>NUCLEOTIDE SEQUENCE [LARGE SCALE GENOMIC DNA]</scope>
    <source>
        <strain>SCM1</strain>
    </source>
</reference>
<proteinExistence type="inferred from homology"/>
<evidence type="ECO:0000255" key="1">
    <source>
        <dbReference type="HAMAP-Rule" id="MF_00754"/>
    </source>
</evidence>
<accession>A9A5I7</accession>
<keyword id="KW-0963">Cytoplasm</keyword>
<keyword id="KW-0255">Endonuclease</keyword>
<keyword id="KW-0378">Hydrolase</keyword>
<keyword id="KW-0540">Nuclease</keyword>
<keyword id="KW-1185">Reference proteome</keyword>
<keyword id="KW-0819">tRNA processing</keyword>
<organism>
    <name type="scientific">Nitrosopumilus maritimus (strain SCM1)</name>
    <dbReference type="NCBI Taxonomy" id="436308"/>
    <lineage>
        <taxon>Archaea</taxon>
        <taxon>Nitrososphaerota</taxon>
        <taxon>Nitrososphaeria</taxon>
        <taxon>Nitrosopumilales</taxon>
        <taxon>Nitrosopumilaceae</taxon>
        <taxon>Nitrosopumilus</taxon>
    </lineage>
</organism>